<evidence type="ECO:0000250" key="1">
    <source>
        <dbReference type="UniProtKB" id="P19938"/>
    </source>
</evidence>
<evidence type="ECO:0000256" key="2">
    <source>
        <dbReference type="SAM" id="MobiDB-lite"/>
    </source>
</evidence>
<evidence type="ECO:0000269" key="3">
    <source>
    </source>
</evidence>
<evidence type="ECO:0000269" key="4">
    <source>
    </source>
</evidence>
<evidence type="ECO:0000303" key="5">
    <source>
    </source>
</evidence>
<evidence type="ECO:0000305" key="6"/>
<evidence type="ECO:0000305" key="7">
    <source>
    </source>
</evidence>
<sequence>MSIPLPHAEFQWDHYDSKVNPVNGHVECTYRTLTCSWSAPRFVESPFLQVHGLAPGLNYGQQAFEGLLAHRTARNRILIFRPASHSSRFRHSASVVSMPPVPESLFLACVHMAVARNAEFVPPHNFAGNMYIRPLEFGSSAQIGLDVPDEFTFCVFVQPHVPLHGHTPLRALVAEEFDRAATRGTGNCKVGGNYGPVLKWSKDAKKPENGGWSALLHVDSKTQSYVDEFSAAALIGVKSPDQESTQVPILTVAHSEAAIHSITAESVVTIAQSFGWTVERRLVKLEELSSFSEVFAVGTAATIRPCSLIYHRSTGKHFTFTSDGPYYQRLWKTLSGIQKGEIEDIFQWCQDLRFEEFGERGHNGQPTADPTRVIEMPE</sequence>
<protein>
    <recommendedName>
        <fullName evidence="5">Aminotransferase apf4</fullName>
        <ecNumber evidence="7">2.6.1.-</ecNumber>
    </recommendedName>
    <alternativeName>
        <fullName evidence="5">Apicidin F synthesis protein 4</fullName>
    </alternativeName>
</protein>
<feature type="chain" id="PRO_0000437159" description="Aminotransferase apf4">
    <location>
        <begin position="1"/>
        <end position="378"/>
    </location>
</feature>
<feature type="region of interest" description="Disordered" evidence="2">
    <location>
        <begin position="359"/>
        <end position="378"/>
    </location>
</feature>
<feature type="binding site" evidence="1">
    <location>
        <position position="88"/>
    </location>
    <ligand>
        <name>pyridoxal 5'-phosphate</name>
        <dbReference type="ChEBI" id="CHEBI:597326"/>
    </ligand>
</feature>
<feature type="binding site" evidence="1">
    <location>
        <position position="228"/>
    </location>
    <ligand>
        <name>pyridoxal 5'-phosphate</name>
        <dbReference type="ChEBI" id="CHEBI:597326"/>
    </ligand>
</feature>
<feature type="modified residue" description="N6-(pyridoxal phosphate)lysine" evidence="1">
    <location>
        <position position="189"/>
    </location>
</feature>
<comment type="function">
    <text evidence="3 4">Aminotransferase; part of the gene cluster that mediates the biosynthesis of the cyclic tetrapeptide apicidin F (APF) (PubMed:25058475). The non-ribosomal peptide synthetase apf1 incorporates four different amino acids to produce apicidin F: L-phenylalanine, D-pipecolic acid (D-pip), N-methoxy-L-tryptophan and L-2-aminooctanedioic acid (PubMed:25058475). L-Phenylalanine is the only proteinogenic amino acid directly used by apf1 (PubMed:24195442, PubMed:25058475). The 3 other apf1 substrates are non-proteinogenic and have to be modified by other enzymes of the cluster (PubMed:25058475). Lysine is converted to delta-1-pyrroline-5-carboxylate (P5C) which is reduced to L-pipecolic acid (L-pip) by apf3 (PubMed:25058475). L-pip is epimerized to D-pip, probably by apf1 activity, prior to incorporation (PubMed:25058475). L-Tryptophan is N-oxidyzed by one of the cytochrome P450 monooxygenases (apf7 or apf8), and further methylated at the hydroxy group by the O-methyltransferase apf6 to yield N-methoxy-L-tryptophan (PubMed:25058475). The synthesis of the fourth apf1 substrate is more complex (PubMed:25058475). The fatty acid synthase apf5 is involved in the synthesis of the octanoic acid backbone of L-2-aminooctanedioic acid by fixing one acetyl-CoA unit and three malonyl-CoA units (PubMed:25058475). Then one of the cytochrome P450 monooxygenases (apf7 or apf8) may oxidize this backbone to 2-oxooctanoic acid (PubMed:25058475). The aminotransferase apf4 is predicted to catalyze the exchange of the keto group with an amino group (PubMed:25058475). The next step would be the oxidation of 2-aminooctanoic acid by one of the cytochrome P450 monooxygenases (apf7 or apf8). The last step is the oxidation of 2-amino-8-hydroxyoctanoic acid to 2-aminooctanedioic acid is catalyzed by the FAD-dependent monooxygenase apf9 (PubMed:25058475).</text>
</comment>
<comment type="cofactor">
    <cofactor evidence="1">
        <name>pyridoxal 5'-phosphate</name>
        <dbReference type="ChEBI" id="CHEBI:597326"/>
    </cofactor>
</comment>
<comment type="pathway">
    <text evidence="4">Secondary metabolite biosynthesis.</text>
</comment>
<comment type="induction">
    <text evidence="4">Expression is positively regulated by the apicidin F cluster-specific transcription factor apf2 that binds to the eight-base-pair motif 5'-TGACGTGA-3' called the 'Api-box' that is found in all promoters of the apicidin F cluster except in the promoter region of apf2 itself (PubMed:25058475).</text>
</comment>
<comment type="biotechnology">
    <text evidence="3">Apicidin F, like the other known apicidins, is a cyclic tetrapeptides with anti-malarial properties via histone deacetylase inhibitory activity (PubMed:24195442).</text>
</comment>
<comment type="similarity">
    <text evidence="6">Belongs to the class-IV pyridoxal-phosphate-dependent aminotransferase family.</text>
</comment>
<name>APF4_GIBF5</name>
<keyword id="KW-0032">Aminotransferase</keyword>
<keyword id="KW-0663">Pyridoxal phosphate</keyword>
<keyword id="KW-1185">Reference proteome</keyword>
<keyword id="KW-0808">Transferase</keyword>
<organism>
    <name type="scientific">Gibberella fujikuroi (strain CBS 195.34 / IMI 58289 / NRRL A-6831)</name>
    <name type="common">Bakanae and foot rot disease fungus</name>
    <name type="synonym">Fusarium fujikuroi</name>
    <dbReference type="NCBI Taxonomy" id="1279085"/>
    <lineage>
        <taxon>Eukaryota</taxon>
        <taxon>Fungi</taxon>
        <taxon>Dikarya</taxon>
        <taxon>Ascomycota</taxon>
        <taxon>Pezizomycotina</taxon>
        <taxon>Sordariomycetes</taxon>
        <taxon>Hypocreomycetidae</taxon>
        <taxon>Hypocreales</taxon>
        <taxon>Nectriaceae</taxon>
        <taxon>Fusarium</taxon>
        <taxon>Fusarium fujikuroi species complex</taxon>
    </lineage>
</organism>
<proteinExistence type="evidence at protein level"/>
<reference key="1">
    <citation type="journal article" date="2013" name="PLoS Pathog.">
        <title>Deciphering the cryptic genome: genome-wide analyses of the rice pathogen Fusarium fujikuroi reveal complex regulation of secondary metabolism and novel metabolites.</title>
        <authorList>
            <person name="Wiemann P."/>
            <person name="Sieber C.M.K."/>
            <person name="von Bargen K.W."/>
            <person name="Studt L."/>
            <person name="Niehaus E.-M."/>
            <person name="Espino J.J."/>
            <person name="Huss K."/>
            <person name="Michielse C.B."/>
            <person name="Albermann S."/>
            <person name="Wagner D."/>
            <person name="Bergner S.V."/>
            <person name="Connolly L.R."/>
            <person name="Fischer A."/>
            <person name="Reuter G."/>
            <person name="Kleigrewe K."/>
            <person name="Bald T."/>
            <person name="Wingfield B.D."/>
            <person name="Ophir R."/>
            <person name="Freeman S."/>
            <person name="Hippler M."/>
            <person name="Smith K.M."/>
            <person name="Brown D.W."/>
            <person name="Proctor R.H."/>
            <person name="Muensterkoetter M."/>
            <person name="Freitag M."/>
            <person name="Humpf H.-U."/>
            <person name="Gueldener U."/>
            <person name="Tudzynski B."/>
        </authorList>
    </citation>
    <scope>NUCLEOTIDE SEQUENCE [LARGE SCALE GENOMIC DNA]</scope>
    <source>
        <strain>CBS 195.34 / IMI 58289 / NRRL A-6831</strain>
    </source>
</reference>
<reference key="2">
    <citation type="journal article" date="2013" name="J. Nat. Prod.">
        <title>Structure elucidation and antimalarial activity of apicidin F: an apicidin-like compound produced by Fusarium fujikuroi.</title>
        <authorList>
            <person name="von Bargen K.W."/>
            <person name="Niehaus E.M."/>
            <person name="Bergander K."/>
            <person name="Brun R."/>
            <person name="Tudzynski B."/>
            <person name="Humpf H.U."/>
        </authorList>
    </citation>
    <scope>FUNCTION</scope>
    <scope>BIOTECHNOLOGY</scope>
</reference>
<reference key="3">
    <citation type="journal article" date="2014" name="PLoS ONE">
        <title>Apicidin F: characterization and genetic manipulation of a new secondary metabolite gene cluster in the rice pathogen Fusarium fujikuroi.</title>
        <authorList>
            <person name="Niehaus E.M."/>
            <person name="Janevska S."/>
            <person name="von Bargen K.W."/>
            <person name="Sieber C.M."/>
            <person name="Harrer H."/>
            <person name="Humpf H.U."/>
            <person name="Tudzynski B."/>
        </authorList>
    </citation>
    <scope>FUNCTION</scope>
    <scope>INDUCTION</scope>
</reference>
<gene>
    <name evidence="5" type="primary">apf4</name>
    <name type="ORF">FFUJ_00011</name>
</gene>
<dbReference type="EC" id="2.6.1.-" evidence="7"/>
<dbReference type="EMBL" id="HF679023">
    <property type="protein sequence ID" value="CCT63353.1"/>
    <property type="molecule type" value="Genomic_DNA"/>
</dbReference>
<dbReference type="SMR" id="S0DS11"/>
<dbReference type="STRING" id="1279085.S0DS11"/>
<dbReference type="EnsemblFungi" id="CCT63353">
    <property type="protein sequence ID" value="CCT63353"/>
    <property type="gene ID" value="FFUJ_00011"/>
</dbReference>
<dbReference type="VEuPathDB" id="FungiDB:FFUJ_00011"/>
<dbReference type="HOGENOM" id="CLU_031922_1_0_1"/>
<dbReference type="Proteomes" id="UP000016800">
    <property type="component" value="Chromosome 1"/>
</dbReference>
<dbReference type="GO" id="GO:0004084">
    <property type="term" value="F:branched-chain-amino-acid transaminase activity"/>
    <property type="evidence" value="ECO:0007669"/>
    <property type="project" value="InterPro"/>
</dbReference>
<dbReference type="GO" id="GO:0009081">
    <property type="term" value="P:branched-chain amino acid metabolic process"/>
    <property type="evidence" value="ECO:0007669"/>
    <property type="project" value="InterPro"/>
</dbReference>
<dbReference type="Gene3D" id="3.30.470.10">
    <property type="match status" value="1"/>
</dbReference>
<dbReference type="Gene3D" id="3.20.10.10">
    <property type="entry name" value="D-amino Acid Aminotransferase, subunit A, domain 2"/>
    <property type="match status" value="1"/>
</dbReference>
<dbReference type="InterPro" id="IPR001544">
    <property type="entry name" value="Aminotrans_IV"/>
</dbReference>
<dbReference type="InterPro" id="IPR036038">
    <property type="entry name" value="Aminotransferase-like"/>
</dbReference>
<dbReference type="InterPro" id="IPR005786">
    <property type="entry name" value="B_amino_transII"/>
</dbReference>
<dbReference type="InterPro" id="IPR043132">
    <property type="entry name" value="BCAT-like_C"/>
</dbReference>
<dbReference type="InterPro" id="IPR043131">
    <property type="entry name" value="BCAT-like_N"/>
</dbReference>
<dbReference type="PANTHER" id="PTHR42825">
    <property type="entry name" value="AMINO ACID AMINOTRANSFERASE"/>
    <property type="match status" value="1"/>
</dbReference>
<dbReference type="PANTHER" id="PTHR42825:SF2">
    <property type="entry name" value="BRANCHED-CHAIN-AMINO-ACID AMINOTRANSFERASE 3, CHLOROPLASTIC-RELATED"/>
    <property type="match status" value="1"/>
</dbReference>
<dbReference type="Pfam" id="PF01063">
    <property type="entry name" value="Aminotran_4"/>
    <property type="match status" value="1"/>
</dbReference>
<dbReference type="PIRSF" id="PIRSF006468">
    <property type="entry name" value="BCAT1"/>
    <property type="match status" value="1"/>
</dbReference>
<dbReference type="SUPFAM" id="SSF56752">
    <property type="entry name" value="D-aminoacid aminotransferase-like PLP-dependent enzymes"/>
    <property type="match status" value="1"/>
</dbReference>
<accession>S0DS11</accession>